<protein>
    <recommendedName>
        <fullName evidence="4">Ranatuerin-2AVa</fullName>
    </recommendedName>
</protein>
<organism>
    <name type="scientific">Rana arvalis</name>
    <name type="common">Moor frog</name>
    <dbReference type="NCBI Taxonomy" id="156871"/>
    <lineage>
        <taxon>Eukaryota</taxon>
        <taxon>Metazoa</taxon>
        <taxon>Chordata</taxon>
        <taxon>Craniata</taxon>
        <taxon>Vertebrata</taxon>
        <taxon>Euteleostomi</taxon>
        <taxon>Amphibia</taxon>
        <taxon>Batrachia</taxon>
        <taxon>Anura</taxon>
        <taxon>Neobatrachia</taxon>
        <taxon>Ranoidea</taxon>
        <taxon>Ranidae</taxon>
        <taxon>Rana</taxon>
        <taxon>Rana</taxon>
    </lineage>
</organism>
<sequence>GLLDVVKGAAKNLLASALDKLKCKVTGC</sequence>
<comment type="function">
    <text evidence="2">Has antibacterial activity against the Gram positive bacterium L.lactis.</text>
</comment>
<comment type="subcellular location">
    <subcellularLocation>
        <location evidence="2 3">Secreted</location>
    </subcellularLocation>
</comment>
<comment type="tissue specificity">
    <text evidence="2 3">Expressed by the skin glands.</text>
</comment>
<comment type="mass spectrometry"/>
<comment type="similarity">
    <text evidence="1">Belongs to the frog skin active peptide (FSAP) family. Ranatuerin subfamily.</text>
</comment>
<proteinExistence type="evidence at protein level"/>
<keyword id="KW-0878">Amphibian defense peptide</keyword>
<keyword id="KW-0044">Antibiotic</keyword>
<keyword id="KW-0929">Antimicrobial</keyword>
<keyword id="KW-0903">Direct protein sequencing</keyword>
<keyword id="KW-1015">Disulfide bond</keyword>
<keyword id="KW-0964">Secreted</keyword>
<evidence type="ECO:0000255" key="1"/>
<evidence type="ECO:0000269" key="2">
    <source>
    </source>
</evidence>
<evidence type="ECO:0000269" key="3">
    <source>
    </source>
</evidence>
<evidence type="ECO:0000303" key="4">
    <source>
    </source>
</evidence>
<evidence type="ECO:0000303" key="5">
    <source>
    </source>
</evidence>
<evidence type="ECO:0000305" key="6"/>
<feature type="peptide" id="PRO_0000373061" description="Ranatuerin-2AVa" evidence="2">
    <location>
        <begin position="1"/>
        <end position="28"/>
    </location>
</feature>
<feature type="disulfide bond" evidence="2">
    <location>
        <begin position="23"/>
        <end position="28"/>
    </location>
</feature>
<reference evidence="6" key="1">
    <citation type="journal article" date="2009" name="Rapid Commun. Mass Spectrom.">
        <title>Mass spectrometric study of peptides secreted by the skin glands of the brown frog Rana arvalis from the Moscow region.</title>
        <authorList>
            <person name="Samgina T.Y."/>
            <person name="Artemenko K.A."/>
            <person name="Gorshkov V.A."/>
            <person name="Ogourtsov S.V."/>
            <person name="Zubarev R.A."/>
            <person name="Lebedev A.T."/>
        </authorList>
    </citation>
    <scope>PROTEIN SEQUENCE</scope>
    <scope>FUNCTION</scope>
    <scope>SUBCELLULAR LOCATION</scope>
    <scope>TISSUE SPECIFICITY</scope>
    <scope>DISULFIDE BOND</scope>
    <source>
        <tissue evidence="2">Skin secretion</tissue>
    </source>
</reference>
<reference key="2">
    <citation type="journal article" date="2022" name="J. Am. Soc. Mass Spectrom.">
        <title>Mass Spectrometry Differentiation between Rana arvalis Populations Based on Their Skin Peptidome Composition.</title>
        <authorList>
            <person name="Samgina T.Y."/>
            <person name="Vasileva I.D."/>
            <person name="Trebse P."/>
            <person name="Torkar G."/>
            <person name="Surin A.K."/>
            <person name="Meng Z."/>
            <person name="Zubarev R.A."/>
            <person name="Lebedev A.T."/>
        </authorList>
    </citation>
    <scope>PROTEIN SEQUENCE</scope>
    <scope>IDENTIFICATION BY MASS SPECTROMETRY</scope>
    <scope>SUBCELLULAR LOCATION</scope>
    <scope>TISSUE SPECIFICITY</scope>
    <source>
        <tissue evidence="5">Skin secretion</tissue>
    </source>
</reference>
<dbReference type="SMR" id="P86161"/>
<dbReference type="GO" id="GO:0005576">
    <property type="term" value="C:extracellular region"/>
    <property type="evidence" value="ECO:0000314"/>
    <property type="project" value="UniProtKB"/>
</dbReference>
<dbReference type="GO" id="GO:0042742">
    <property type="term" value="P:defense response to bacterium"/>
    <property type="evidence" value="ECO:0007669"/>
    <property type="project" value="UniProtKB-KW"/>
</dbReference>
<dbReference type="InterPro" id="IPR012521">
    <property type="entry name" value="Antimicrobial_frog_2"/>
</dbReference>
<dbReference type="Pfam" id="PF08023">
    <property type="entry name" value="Antimicrobial_2"/>
    <property type="match status" value="1"/>
</dbReference>
<name>RN2A_RANAR</name>
<accession>P86161</accession>